<name>SOML_ANGAN</name>
<comment type="subcellular location">
    <subcellularLocation>
        <location>Secreted</location>
    </subcellularLocation>
</comment>
<comment type="similarity">
    <text evidence="3">Belongs to the somatotropin/prolactin family.</text>
</comment>
<reference key="1">
    <citation type="journal article" date="1997" name="Gene">
        <title>cDNA cloning of eel (Anguilla anguilla) somatolactin.</title>
        <authorList>
            <person name="May D."/>
            <person name="Todd C.M."/>
            <person name="Rand-Weaver M."/>
        </authorList>
    </citation>
    <scope>NUCLEOTIDE SEQUENCE [MRNA]</scope>
    <source>
        <tissue>Pituitary</tissue>
    </source>
</reference>
<organism>
    <name type="scientific">Anguilla anguilla</name>
    <name type="common">European freshwater eel</name>
    <name type="synonym">Muraena anguilla</name>
    <dbReference type="NCBI Taxonomy" id="7936"/>
    <lineage>
        <taxon>Eukaryota</taxon>
        <taxon>Metazoa</taxon>
        <taxon>Chordata</taxon>
        <taxon>Craniata</taxon>
        <taxon>Vertebrata</taxon>
        <taxon>Euteleostomi</taxon>
        <taxon>Actinopterygii</taxon>
        <taxon>Neopterygii</taxon>
        <taxon>Teleostei</taxon>
        <taxon>Anguilliformes</taxon>
        <taxon>Anguillidae</taxon>
        <taxon>Anguilla</taxon>
    </lineage>
</organism>
<dbReference type="EMBL" id="U63884">
    <property type="protein sequence ID" value="AAB53035.1"/>
    <property type="molecule type" value="mRNA"/>
</dbReference>
<dbReference type="SMR" id="Q90216"/>
<dbReference type="GO" id="GO:0005615">
    <property type="term" value="C:extracellular space"/>
    <property type="evidence" value="ECO:0007669"/>
    <property type="project" value="TreeGrafter"/>
</dbReference>
<dbReference type="GO" id="GO:0070186">
    <property type="term" value="F:growth hormone activity"/>
    <property type="evidence" value="ECO:0007669"/>
    <property type="project" value="TreeGrafter"/>
</dbReference>
<dbReference type="GO" id="GO:0005131">
    <property type="term" value="F:growth hormone receptor binding"/>
    <property type="evidence" value="ECO:0007669"/>
    <property type="project" value="TreeGrafter"/>
</dbReference>
<dbReference type="GO" id="GO:0048513">
    <property type="term" value="P:animal organ development"/>
    <property type="evidence" value="ECO:0007669"/>
    <property type="project" value="TreeGrafter"/>
</dbReference>
<dbReference type="GO" id="GO:0060396">
    <property type="term" value="P:growth hormone receptor signaling pathway"/>
    <property type="evidence" value="ECO:0007669"/>
    <property type="project" value="TreeGrafter"/>
</dbReference>
<dbReference type="GO" id="GO:0045927">
    <property type="term" value="P:positive regulation of growth"/>
    <property type="evidence" value="ECO:0007669"/>
    <property type="project" value="TreeGrafter"/>
</dbReference>
<dbReference type="GO" id="GO:0046427">
    <property type="term" value="P:positive regulation of receptor signaling pathway via JAK-STAT"/>
    <property type="evidence" value="ECO:0007669"/>
    <property type="project" value="TreeGrafter"/>
</dbReference>
<dbReference type="GO" id="GO:0031667">
    <property type="term" value="P:response to nutrient levels"/>
    <property type="evidence" value="ECO:0007669"/>
    <property type="project" value="TreeGrafter"/>
</dbReference>
<dbReference type="Gene3D" id="1.20.1250.10">
    <property type="match status" value="1"/>
</dbReference>
<dbReference type="InterPro" id="IPR009079">
    <property type="entry name" value="4_helix_cytokine-like_core"/>
</dbReference>
<dbReference type="InterPro" id="IPR001400">
    <property type="entry name" value="Somatotropin/Prolactin"/>
</dbReference>
<dbReference type="InterPro" id="IPR018116">
    <property type="entry name" value="Somatotropin_CS"/>
</dbReference>
<dbReference type="PANTHER" id="PTHR11417:SF3">
    <property type="entry name" value="SOMATOLACTIN ALPHA ISOFORM X1-RELATED"/>
    <property type="match status" value="1"/>
</dbReference>
<dbReference type="PANTHER" id="PTHR11417">
    <property type="entry name" value="SOMATOTROPIN,PROLACTIN"/>
    <property type="match status" value="1"/>
</dbReference>
<dbReference type="Pfam" id="PF00103">
    <property type="entry name" value="Hormone_1"/>
    <property type="match status" value="1"/>
</dbReference>
<dbReference type="PRINTS" id="PR00836">
    <property type="entry name" value="SOMATOTROPIN"/>
</dbReference>
<dbReference type="SUPFAM" id="SSF47266">
    <property type="entry name" value="4-helical cytokines"/>
    <property type="match status" value="1"/>
</dbReference>
<dbReference type="PROSITE" id="PS00338">
    <property type="entry name" value="SOMATOTROPIN_2"/>
    <property type="match status" value="1"/>
</dbReference>
<feature type="signal peptide" evidence="2">
    <location>
        <begin position="1"/>
        <end position="24"/>
    </location>
</feature>
<feature type="chain" id="PRO_0000033065" description="Somatolactin">
    <location>
        <begin position="25"/>
        <end position="228"/>
    </location>
</feature>
<feature type="glycosylation site" description="N-linked (GlcNAc...) asparagine" evidence="2">
    <location>
        <position position="141"/>
    </location>
</feature>
<feature type="glycosylation site" description="N-linked (GlcNAc...) asparagine" evidence="2">
    <location>
        <position position="177"/>
    </location>
</feature>
<feature type="disulfide bond" evidence="1">
    <location>
        <begin position="29"/>
        <end position="38"/>
    </location>
</feature>
<feature type="disulfide bond" evidence="1">
    <location>
        <begin position="88"/>
        <end position="200"/>
    </location>
</feature>
<feature type="disulfide bond" evidence="1">
    <location>
        <begin position="217"/>
        <end position="225"/>
    </location>
</feature>
<sequence length="228" mass="26184">MFSIRMNKVLQGFVCLMLTHRIVGYPMDCKEDQDGTRCPSISLDKLLDRIIQHAELIYRVSEESCTLFEEMYIPSSIRAQLSRGGNACSTRSVPIQGRIQQISDKWLLHSTLVVIQSWTGPLQSLQITMDLYDNAPDGLLNKTKWMSTKLMNLEQGVTVLIRKMLNEDILVSDPSQNLTHFATQPNMVESVLTDYTLLTCFRKDAHRVETFLKLLKCRQSDRLSCFLY</sequence>
<protein>
    <recommendedName>
        <fullName>Somatolactin</fullName>
        <shortName>SL</shortName>
    </recommendedName>
</protein>
<keyword id="KW-1015">Disulfide bond</keyword>
<keyword id="KW-0325">Glycoprotein</keyword>
<keyword id="KW-0372">Hormone</keyword>
<keyword id="KW-0964">Secreted</keyword>
<keyword id="KW-0732">Signal</keyword>
<evidence type="ECO:0000250" key="1"/>
<evidence type="ECO:0000255" key="2"/>
<evidence type="ECO:0000305" key="3"/>
<accession>Q90216</accession>
<proteinExistence type="evidence at transcript level"/>